<feature type="signal peptide" evidence="2">
    <location>
        <begin position="1"/>
        <end position="26"/>
    </location>
</feature>
<feature type="chain" id="PRO_0000320951" description="Placenta-expressed transcript 1 protein">
    <location>
        <begin position="27"/>
        <end position="242"/>
    </location>
</feature>
<feature type="topological domain" description="Extracellular" evidence="2">
    <location>
        <begin position="27"/>
        <end position="220"/>
    </location>
</feature>
<feature type="transmembrane region" description="Helical" evidence="2">
    <location>
        <begin position="221"/>
        <end position="241"/>
    </location>
</feature>
<feature type="topological domain" description="Cytoplasmic" evidence="2">
    <location>
        <position position="242"/>
    </location>
</feature>
<feature type="region of interest" description="Disordered" evidence="3">
    <location>
        <begin position="162"/>
        <end position="209"/>
    </location>
</feature>
<feature type="compositionally biased region" description="Pro residues" evidence="3">
    <location>
        <begin position="169"/>
        <end position="178"/>
    </location>
</feature>
<feature type="compositionally biased region" description="Low complexity" evidence="3">
    <location>
        <begin position="179"/>
        <end position="205"/>
    </location>
</feature>
<feature type="glycosylation site" description="N-linked (GlcNAc...) asparagine" evidence="2">
    <location>
        <position position="28"/>
    </location>
</feature>
<feature type="glycosylation site" description="N-linked (GlcNAc...) asparagine" evidence="2">
    <location>
        <position position="81"/>
    </location>
</feature>
<feature type="glycosylation site" description="N-linked (GlcNAc...) asparagine" evidence="2">
    <location>
        <position position="106"/>
    </location>
</feature>
<comment type="function">
    <text evidence="1">Modulates leading keratinocyte migration and cellular adhesion to matrix proteins during a wound-healing response and promotes wound repair. May play a role during trichilemmal differentiation of the hair follicle (By similarity).</text>
</comment>
<comment type="subcellular location">
    <subcellularLocation>
        <location evidence="4">Membrane</location>
        <topology evidence="4">Single-pass type I membrane protein</topology>
    </subcellularLocation>
    <subcellularLocation>
        <location evidence="1">Apical cell membrane</location>
    </subcellularLocation>
    <text evidence="1">Localized at the apical membrane of the most differentiated keratinocytes of the outer root sheath (ORS), clustered mainly in planar regions of the plasma membrane at the base of microvilli.</text>
</comment>
<comment type="PTM">
    <text evidence="1">N-glycosylated.</text>
</comment>
<comment type="caution">
    <text evidence="4">For human, rat and golden hamster orthologs, a GPI-anchor has been predicted. However, in the case of pig and bovine, no GPI-anchor motifs have been detected, but it does not rule out the possibility of a GPI-anchor instead of a single-pass type I membrane protein.</text>
</comment>
<comment type="sequence caution" evidence="4">
    <conflict type="erroneous initiation">
        <sequence resource="EMBL-CDS" id="AAI40682"/>
    </conflict>
    <text>Extended N-terminus.</text>
</comment>
<keyword id="KW-1003">Cell membrane</keyword>
<keyword id="KW-0221">Differentiation</keyword>
<keyword id="KW-0325">Glycoprotein</keyword>
<keyword id="KW-0472">Membrane</keyword>
<keyword id="KW-1185">Reference proteome</keyword>
<keyword id="KW-0732">Signal</keyword>
<keyword id="KW-0812">Transmembrane</keyword>
<keyword id="KW-1133">Transmembrane helix</keyword>
<organism>
    <name type="scientific">Bos taurus</name>
    <name type="common">Bovine</name>
    <dbReference type="NCBI Taxonomy" id="9913"/>
    <lineage>
        <taxon>Eukaryota</taxon>
        <taxon>Metazoa</taxon>
        <taxon>Chordata</taxon>
        <taxon>Craniata</taxon>
        <taxon>Vertebrata</taxon>
        <taxon>Euteleostomi</taxon>
        <taxon>Mammalia</taxon>
        <taxon>Eutheria</taxon>
        <taxon>Laurasiatheria</taxon>
        <taxon>Artiodactyla</taxon>
        <taxon>Ruminantia</taxon>
        <taxon>Pecora</taxon>
        <taxon>Bovidae</taxon>
        <taxon>Bovinae</taxon>
        <taxon>Bos</taxon>
    </lineage>
</organism>
<accession>A5D7U1</accession>
<protein>
    <recommendedName>
        <fullName>Placenta-expressed transcript 1 protein</fullName>
    </recommendedName>
</protein>
<reference key="1">
    <citation type="submission" date="2007-04" db="EMBL/GenBank/DDBJ databases">
        <authorList>
            <consortium name="NIH - Mammalian Gene Collection (MGC) project"/>
        </authorList>
    </citation>
    <scope>NUCLEOTIDE SEQUENCE [LARGE SCALE MRNA]</scope>
    <source>
        <strain>Hereford</strain>
        <tissue>Placenta</tissue>
    </source>
</reference>
<gene>
    <name type="primary">PLET1</name>
</gene>
<dbReference type="EMBL" id="BC140681">
    <property type="protein sequence ID" value="AAI40682.1"/>
    <property type="status" value="ALT_INIT"/>
    <property type="molecule type" value="mRNA"/>
</dbReference>
<dbReference type="RefSeq" id="NP_001107010.1">
    <property type="nucleotide sequence ID" value="NM_001113538.1"/>
</dbReference>
<dbReference type="FunCoup" id="A5D7U1">
    <property type="interactions" value="5"/>
</dbReference>
<dbReference type="STRING" id="9913.ENSBTAP00000020999"/>
<dbReference type="GlyCosmos" id="A5D7U1">
    <property type="glycosylation" value="3 sites, No reported glycans"/>
</dbReference>
<dbReference type="GlyGen" id="A5D7U1">
    <property type="glycosylation" value="3 sites"/>
</dbReference>
<dbReference type="PaxDb" id="9913-ENSBTAP00000020999"/>
<dbReference type="GeneID" id="505518"/>
<dbReference type="KEGG" id="bta:505518"/>
<dbReference type="CTD" id="349633"/>
<dbReference type="eggNOG" id="ENOG502RTZP">
    <property type="taxonomic scope" value="Eukaryota"/>
</dbReference>
<dbReference type="HOGENOM" id="CLU_099483_0_0_1"/>
<dbReference type="InParanoid" id="A5D7U1"/>
<dbReference type="OrthoDB" id="9446289at2759"/>
<dbReference type="TreeFam" id="TF344172"/>
<dbReference type="Proteomes" id="UP000009136">
    <property type="component" value="Unplaced"/>
</dbReference>
<dbReference type="GO" id="GO:0016324">
    <property type="term" value="C:apical plasma membrane"/>
    <property type="evidence" value="ECO:0000250"/>
    <property type="project" value="UniProtKB"/>
</dbReference>
<dbReference type="GO" id="GO:0009897">
    <property type="term" value="C:external side of plasma membrane"/>
    <property type="evidence" value="ECO:0000318"/>
    <property type="project" value="GO_Central"/>
</dbReference>
<dbReference type="GO" id="GO:0030154">
    <property type="term" value="P:cell differentiation"/>
    <property type="evidence" value="ECO:0007669"/>
    <property type="project" value="UniProtKB-KW"/>
</dbReference>
<dbReference type="GO" id="GO:0001953">
    <property type="term" value="P:negative regulation of cell-matrix adhesion"/>
    <property type="evidence" value="ECO:0000250"/>
    <property type="project" value="UniProtKB"/>
</dbReference>
<dbReference type="GO" id="GO:0030335">
    <property type="term" value="P:positive regulation of cell migration"/>
    <property type="evidence" value="ECO:0000250"/>
    <property type="project" value="UniProtKB"/>
</dbReference>
<dbReference type="GO" id="GO:0035313">
    <property type="term" value="P:wound healing, spreading of epidermal cells"/>
    <property type="evidence" value="ECO:0000250"/>
    <property type="project" value="UniProtKB"/>
</dbReference>
<dbReference type="InterPro" id="IPR026184">
    <property type="entry name" value="PLET1"/>
</dbReference>
<dbReference type="PANTHER" id="PTHR22527">
    <property type="entry name" value="PLACENTA-EXPRESSED TRANSCRIPT 1 PROTEIN"/>
    <property type="match status" value="1"/>
</dbReference>
<dbReference type="PANTHER" id="PTHR22527:SF2">
    <property type="entry name" value="PLACENTA-EXPRESSED TRANSCRIPT 1 PROTEIN"/>
    <property type="match status" value="1"/>
</dbReference>
<sequence length="242" mass="26609">MAILRSLLLPLGLLLCLWLLCSPASCTNSTTNCKPFLSVTTKKSSLIHISPDIYKSNTLYTVSTQVSHGIISVVLEARDQNKSVIGSWENPSDHCEGRAEYYLKGNFSTLFKAKWMSPNSTDITTVKINIYTVNSLRNAELDSITLPEVGTVTVKHVSTKQVITTPTHKPTPAPPKPTTNPQKTTTNHSIPTTSLPKPTTSLYTSHPKLTTTHKSSANRAFLCPVREAIQILFIFLIGTLLF</sequence>
<evidence type="ECO:0000250" key="1"/>
<evidence type="ECO:0000255" key="2"/>
<evidence type="ECO:0000256" key="3">
    <source>
        <dbReference type="SAM" id="MobiDB-lite"/>
    </source>
</evidence>
<evidence type="ECO:0000305" key="4"/>
<proteinExistence type="evidence at transcript level"/>
<name>PLET1_BOVIN</name>